<gene>
    <name evidence="1" type="primary">purP</name>
    <name type="ordered locus">MJ0136</name>
</gene>
<keyword id="KW-0002">3D-structure</keyword>
<keyword id="KW-0067">ATP-binding</keyword>
<keyword id="KW-0436">Ligase</keyword>
<keyword id="KW-0460">Magnesium</keyword>
<keyword id="KW-0464">Manganese</keyword>
<keyword id="KW-0479">Metal-binding</keyword>
<keyword id="KW-0547">Nucleotide-binding</keyword>
<keyword id="KW-0658">Purine biosynthesis</keyword>
<keyword id="KW-1185">Reference proteome</keyword>
<organism>
    <name type="scientific">Methanocaldococcus jannaschii (strain ATCC 43067 / DSM 2661 / JAL-1 / JCM 10045 / NBRC 100440)</name>
    <name type="common">Methanococcus jannaschii</name>
    <dbReference type="NCBI Taxonomy" id="243232"/>
    <lineage>
        <taxon>Archaea</taxon>
        <taxon>Methanobacteriati</taxon>
        <taxon>Methanobacteriota</taxon>
        <taxon>Methanomada group</taxon>
        <taxon>Methanococci</taxon>
        <taxon>Methanococcales</taxon>
        <taxon>Methanocaldococcaceae</taxon>
        <taxon>Methanocaldococcus</taxon>
    </lineage>
</organism>
<reference key="1">
    <citation type="journal article" date="1996" name="Science">
        <title>Complete genome sequence of the methanogenic archaeon, Methanococcus jannaschii.</title>
        <authorList>
            <person name="Bult C.J."/>
            <person name="White O."/>
            <person name="Olsen G.J."/>
            <person name="Zhou L."/>
            <person name="Fleischmann R.D."/>
            <person name="Sutton G.G."/>
            <person name="Blake J.A."/>
            <person name="FitzGerald L.M."/>
            <person name="Clayton R.A."/>
            <person name="Gocayne J.D."/>
            <person name="Kerlavage A.R."/>
            <person name="Dougherty B.A."/>
            <person name="Tomb J.-F."/>
            <person name="Adams M.D."/>
            <person name="Reich C.I."/>
            <person name="Overbeek R."/>
            <person name="Kirkness E.F."/>
            <person name="Weinstock K.G."/>
            <person name="Merrick J.M."/>
            <person name="Glodek A."/>
            <person name="Scott J.L."/>
            <person name="Geoghagen N.S.M."/>
            <person name="Weidman J.F."/>
            <person name="Fuhrmann J.L."/>
            <person name="Nguyen D."/>
            <person name="Utterback T.R."/>
            <person name="Kelley J.M."/>
            <person name="Peterson J.D."/>
            <person name="Sadow P.W."/>
            <person name="Hanna M.C."/>
            <person name="Cotton M.D."/>
            <person name="Roberts K.M."/>
            <person name="Hurst M.A."/>
            <person name="Kaine B.P."/>
            <person name="Borodovsky M."/>
            <person name="Klenk H.-P."/>
            <person name="Fraser C.M."/>
            <person name="Smith H.O."/>
            <person name="Woese C.R."/>
            <person name="Venter J.C."/>
        </authorList>
    </citation>
    <scope>NUCLEOTIDE SEQUENCE [LARGE SCALE GENOMIC DNA]</scope>
    <source>
        <strain>ATCC 43067 / DSM 2661 / JAL-1 / JCM 10045 / NBRC 100440</strain>
    </source>
</reference>
<reference key="2">
    <citation type="journal article" date="2005" name="J. Biol. Chem.">
        <title>A Methanocaldococcus jannaschii archaeal signature gene encodes for a 5-formaminoimidazole-4-carboxamide-1-(beta)-D-ribofuranosyl 5'-monophosphate synthetase: a new enzyme in purine biosynthesis.</title>
        <authorList>
            <person name="Ownby K."/>
            <person name="Xu H."/>
            <person name="White R.H."/>
        </authorList>
    </citation>
    <scope>FUNCTION</scope>
    <scope>COFACTOR</scope>
    <scope>BIOPHYSICOCHEMICAL PROPERTIES</scope>
    <scope>ACTIVITY REGULATION</scope>
</reference>
<reference key="3">
    <citation type="journal article" date="2008" name="Biochemistry">
        <title>Crystal structure and function of 5-formaminoimidazole-4-carboxamide ribonucleotide synthetase from Methanocaldococcus jannaschii.</title>
        <authorList>
            <person name="Zhang Y."/>
            <person name="White R.H."/>
            <person name="Ealick S.E."/>
        </authorList>
    </citation>
    <scope>X-RAY CRYSTALLOGRAPHY (2.1 ANGSTROMS) IN COMPLEXES WITH ATP AND SUBSTRATE AICAR</scope>
    <scope>SUBUNIT</scope>
</reference>
<evidence type="ECO:0000255" key="1">
    <source>
        <dbReference type="HAMAP-Rule" id="MF_01163"/>
    </source>
</evidence>
<evidence type="ECO:0000269" key="2">
    <source>
    </source>
</evidence>
<evidence type="ECO:0000269" key="3">
    <source>
    </source>
</evidence>
<evidence type="ECO:0007829" key="4">
    <source>
        <dbReference type="PDB" id="2R7K"/>
    </source>
</evidence>
<evidence type="ECO:0007829" key="5">
    <source>
        <dbReference type="PDB" id="2R7N"/>
    </source>
</evidence>
<feature type="chain" id="PRO_0000148024" description="5-formaminoimidazole-4-carboxamide-1-(beta)-D-ribofuranosyl 5'-monophosphate synthetase">
    <location>
        <begin position="1"/>
        <end position="361"/>
    </location>
</feature>
<feature type="domain" description="ATP-grasp" evidence="1">
    <location>
        <begin position="116"/>
        <end position="348"/>
    </location>
</feature>
<feature type="binding site">
    <location>
        <position position="27"/>
    </location>
    <ligand>
        <name>5-amino-1-(5-phospho-beta-D-ribosyl)imidazole-4-carboxamide</name>
        <dbReference type="ChEBI" id="CHEBI:58475"/>
    </ligand>
</feature>
<feature type="binding site">
    <location>
        <position position="94"/>
    </location>
    <ligand>
        <name>5-amino-1-(5-phospho-beta-D-ribosyl)imidazole-4-carboxamide</name>
        <dbReference type="ChEBI" id="CHEBI:58475"/>
    </ligand>
</feature>
<feature type="binding site">
    <location>
        <begin position="156"/>
        <end position="166"/>
    </location>
    <ligand>
        <name>ATP</name>
        <dbReference type="ChEBI" id="CHEBI:30616"/>
    </ligand>
</feature>
<feature type="binding site">
    <location>
        <begin position="199"/>
        <end position="202"/>
    </location>
    <ligand>
        <name>ATP</name>
        <dbReference type="ChEBI" id="CHEBI:30616"/>
    </ligand>
</feature>
<feature type="binding site">
    <location>
        <position position="230"/>
    </location>
    <ligand>
        <name>ATP</name>
        <dbReference type="ChEBI" id="CHEBI:30616"/>
    </ligand>
</feature>
<feature type="binding site">
    <location>
        <position position="258"/>
    </location>
    <ligand>
        <name>5-amino-1-(5-phospho-beta-D-ribosyl)imidazole-4-carboxamide</name>
        <dbReference type="ChEBI" id="CHEBI:58475"/>
    </ligand>
</feature>
<feature type="binding site" evidence="1">
    <location>
        <position position="297"/>
    </location>
    <ligand>
        <name>Mg(2+)</name>
        <dbReference type="ChEBI" id="CHEBI:18420"/>
    </ligand>
</feature>
<feature type="binding site" evidence="1">
    <location>
        <position position="310"/>
    </location>
    <ligand>
        <name>Mg(2+)</name>
        <dbReference type="ChEBI" id="CHEBI:18420"/>
    </ligand>
</feature>
<feature type="helix" evidence="4">
    <location>
        <begin position="4"/>
        <end position="11"/>
    </location>
</feature>
<feature type="strand" evidence="4">
    <location>
        <begin position="20"/>
        <end position="26"/>
    </location>
</feature>
<feature type="helix" evidence="4">
    <location>
        <begin position="29"/>
        <end position="38"/>
    </location>
</feature>
<feature type="strand" evidence="4">
    <location>
        <begin position="43"/>
        <end position="47"/>
    </location>
</feature>
<feature type="turn" evidence="5">
    <location>
        <begin position="49"/>
        <end position="51"/>
    </location>
</feature>
<feature type="helix" evidence="4">
    <location>
        <begin position="53"/>
        <end position="57"/>
    </location>
</feature>
<feature type="strand" evidence="4">
    <location>
        <begin position="62"/>
        <end position="66"/>
    </location>
</feature>
<feature type="helix" evidence="4">
    <location>
        <begin position="70"/>
        <end position="74"/>
    </location>
</feature>
<feature type="helix" evidence="4">
    <location>
        <begin position="76"/>
        <end position="84"/>
    </location>
</feature>
<feature type="strand" evidence="4">
    <location>
        <begin position="87"/>
        <end position="89"/>
    </location>
</feature>
<feature type="helix" evidence="4">
    <location>
        <begin position="93"/>
        <end position="99"/>
    </location>
</feature>
<feature type="helix" evidence="4">
    <location>
        <begin position="101"/>
        <end position="106"/>
    </location>
</feature>
<feature type="strand" evidence="4">
    <location>
        <begin position="112"/>
        <end position="114"/>
    </location>
</feature>
<feature type="helix" evidence="4">
    <location>
        <begin position="116"/>
        <end position="120"/>
    </location>
</feature>
<feature type="turn" evidence="4">
    <location>
        <begin position="121"/>
        <end position="123"/>
    </location>
</feature>
<feature type="helix" evidence="4">
    <location>
        <begin position="125"/>
        <end position="134"/>
    </location>
</feature>
<feature type="strand" evidence="4">
    <location>
        <begin position="142"/>
        <end position="145"/>
    </location>
</feature>
<feature type="helix" evidence="4">
    <location>
        <begin position="146"/>
        <end position="148"/>
    </location>
</feature>
<feature type="strand" evidence="4">
    <location>
        <begin position="153"/>
        <end position="156"/>
    </location>
</feature>
<feature type="strand" evidence="4">
    <location>
        <begin position="166"/>
        <end position="171"/>
    </location>
</feature>
<feature type="helix" evidence="4">
    <location>
        <begin position="172"/>
        <end position="184"/>
    </location>
</feature>
<feature type="strand" evidence="5">
    <location>
        <begin position="186"/>
        <end position="188"/>
    </location>
</feature>
<feature type="helix" evidence="4">
    <location>
        <begin position="190"/>
        <end position="195"/>
    </location>
</feature>
<feature type="strand" evidence="4">
    <location>
        <begin position="197"/>
        <end position="200"/>
    </location>
</feature>
<feature type="strand" evidence="4">
    <location>
        <begin position="204"/>
        <end position="214"/>
    </location>
</feature>
<feature type="turn" evidence="4">
    <location>
        <begin position="215"/>
        <end position="218"/>
    </location>
</feature>
<feature type="strand" evidence="4">
    <location>
        <begin position="219"/>
        <end position="232"/>
    </location>
</feature>
<feature type="helix" evidence="4">
    <location>
        <begin position="233"/>
        <end position="236"/>
    </location>
</feature>
<feature type="helix" evidence="4">
    <location>
        <begin position="241"/>
        <end position="245"/>
    </location>
</feature>
<feature type="strand" evidence="4">
    <location>
        <begin position="253"/>
        <end position="260"/>
    </location>
</feature>
<feature type="helix" evidence="4">
    <location>
        <begin position="265"/>
        <end position="267"/>
    </location>
</feature>
<feature type="helix" evidence="4">
    <location>
        <begin position="268"/>
        <end position="285"/>
    </location>
</feature>
<feature type="strand" evidence="4">
    <location>
        <begin position="292"/>
        <end position="300"/>
    </location>
</feature>
<feature type="strand" evidence="4">
    <location>
        <begin position="306"/>
        <end position="315"/>
    </location>
</feature>
<feature type="helix" evidence="4">
    <location>
        <begin position="317"/>
        <end position="322"/>
    </location>
</feature>
<feature type="helix" evidence="4">
    <location>
        <begin position="329"/>
        <end position="331"/>
    </location>
</feature>
<feature type="helix" evidence="4">
    <location>
        <begin position="339"/>
        <end position="353"/>
    </location>
</feature>
<feature type="helix" evidence="4">
    <location>
        <begin position="356"/>
        <end position="358"/>
    </location>
</feature>
<dbReference type="EC" id="6.3.4.23" evidence="1"/>
<dbReference type="EMBL" id="L77117">
    <property type="protein sequence ID" value="AAB98117.1"/>
    <property type="molecule type" value="Genomic_DNA"/>
</dbReference>
<dbReference type="PIR" id="H64316">
    <property type="entry name" value="H64316"/>
</dbReference>
<dbReference type="RefSeq" id="WP_010869629.1">
    <property type="nucleotide sequence ID" value="NC_000909.1"/>
</dbReference>
<dbReference type="PDB" id="2R7K">
    <property type="method" value="X-ray"/>
    <property type="resolution" value="2.10 A"/>
    <property type="chains" value="A=1-361"/>
</dbReference>
<dbReference type="PDB" id="2R7L">
    <property type="method" value="X-ray"/>
    <property type="resolution" value="2.10 A"/>
    <property type="chains" value="A=1-361"/>
</dbReference>
<dbReference type="PDB" id="2R7M">
    <property type="method" value="X-ray"/>
    <property type="resolution" value="2.30 A"/>
    <property type="chains" value="A=1-361"/>
</dbReference>
<dbReference type="PDB" id="2R7N">
    <property type="method" value="X-ray"/>
    <property type="resolution" value="2.40 A"/>
    <property type="chains" value="A=1-361"/>
</dbReference>
<dbReference type="PDBsum" id="2R7K"/>
<dbReference type="PDBsum" id="2R7L"/>
<dbReference type="PDBsum" id="2R7M"/>
<dbReference type="PDBsum" id="2R7N"/>
<dbReference type="SMR" id="Q57600"/>
<dbReference type="STRING" id="243232.MJ_0136"/>
<dbReference type="PaxDb" id="243232-MJ_0136"/>
<dbReference type="EnsemblBacteria" id="AAB98117">
    <property type="protein sequence ID" value="AAB98117"/>
    <property type="gene ID" value="MJ_0136"/>
</dbReference>
<dbReference type="GeneID" id="1450977"/>
<dbReference type="KEGG" id="mja:MJ_0136"/>
<dbReference type="eggNOG" id="arCOG04346">
    <property type="taxonomic scope" value="Archaea"/>
</dbReference>
<dbReference type="HOGENOM" id="CLU_065084_0_0_2"/>
<dbReference type="InParanoid" id="Q57600"/>
<dbReference type="OrthoDB" id="98133at2157"/>
<dbReference type="PhylomeDB" id="Q57600"/>
<dbReference type="BioCyc" id="MetaCyc:MONOMER-14616"/>
<dbReference type="BRENDA" id="6.3.4.23">
    <property type="organism ID" value="3260"/>
</dbReference>
<dbReference type="UniPathway" id="UPA00074">
    <property type="reaction ID" value="UER00134"/>
</dbReference>
<dbReference type="EvolutionaryTrace" id="Q57600"/>
<dbReference type="Proteomes" id="UP000000805">
    <property type="component" value="Chromosome"/>
</dbReference>
<dbReference type="GO" id="GO:0005524">
    <property type="term" value="F:ATP binding"/>
    <property type="evidence" value="ECO:0007669"/>
    <property type="project" value="UniProtKB-KW"/>
</dbReference>
<dbReference type="GO" id="GO:0016879">
    <property type="term" value="F:ligase activity, forming carbon-nitrogen bonds"/>
    <property type="evidence" value="ECO:0007669"/>
    <property type="project" value="UniProtKB-UniRule"/>
</dbReference>
<dbReference type="GO" id="GO:0000287">
    <property type="term" value="F:magnesium ion binding"/>
    <property type="evidence" value="ECO:0007669"/>
    <property type="project" value="InterPro"/>
</dbReference>
<dbReference type="GO" id="GO:0006189">
    <property type="term" value="P:'de novo' IMP biosynthetic process"/>
    <property type="evidence" value="ECO:0007669"/>
    <property type="project" value="UniProtKB-UniRule"/>
</dbReference>
<dbReference type="Gene3D" id="3.40.50.20">
    <property type="match status" value="1"/>
</dbReference>
<dbReference type="Gene3D" id="3.30.1490.20">
    <property type="entry name" value="ATP-grasp fold, A domain"/>
    <property type="match status" value="1"/>
</dbReference>
<dbReference type="Gene3D" id="3.30.470.20">
    <property type="entry name" value="ATP-grasp fold, B domain"/>
    <property type="match status" value="1"/>
</dbReference>
<dbReference type="HAMAP" id="MF_01163">
    <property type="entry name" value="IMP_biosynth_PurP"/>
    <property type="match status" value="1"/>
</dbReference>
<dbReference type="InterPro" id="IPR011761">
    <property type="entry name" value="ATP-grasp"/>
</dbReference>
<dbReference type="InterPro" id="IPR013815">
    <property type="entry name" value="ATP_grasp_subdomain_1"/>
</dbReference>
<dbReference type="InterPro" id="IPR023656">
    <property type="entry name" value="IMP_biosynth_PurP"/>
</dbReference>
<dbReference type="InterPro" id="IPR009720">
    <property type="entry name" value="IMP_biosynth_PurP_C"/>
</dbReference>
<dbReference type="InterPro" id="IPR010672">
    <property type="entry name" value="IMP_biosynth_PurP_N"/>
</dbReference>
<dbReference type="InterPro" id="IPR016185">
    <property type="entry name" value="PreATP-grasp_dom_sf"/>
</dbReference>
<dbReference type="NCBIfam" id="NF009780">
    <property type="entry name" value="PRK13278.1-5"/>
    <property type="match status" value="1"/>
</dbReference>
<dbReference type="PANTHER" id="PTHR38147:SF2">
    <property type="entry name" value="5-FORMAMINOIMIDAZOLE-4-CARBOXAMIDE-1-(BETA)-D-RIBOFURANOSYL 5'-MONOPHOSPHATE SYNTHETASE"/>
    <property type="match status" value="1"/>
</dbReference>
<dbReference type="PANTHER" id="PTHR38147">
    <property type="entry name" value="5-FORMAMINOIMIDAZOLE-4-CARBOXAMIDE-1-(BETA)-D-RIBOFURANOSYL 5'-MONOPHOSPHATE SYNTHETASE-RELATED"/>
    <property type="match status" value="1"/>
</dbReference>
<dbReference type="Pfam" id="PF06849">
    <property type="entry name" value="DUF1246"/>
    <property type="match status" value="1"/>
</dbReference>
<dbReference type="Pfam" id="PF06973">
    <property type="entry name" value="DUF1297"/>
    <property type="match status" value="1"/>
</dbReference>
<dbReference type="PIRSF" id="PIRSF004602">
    <property type="entry name" value="ATPgrasp_PurP"/>
    <property type="match status" value="1"/>
</dbReference>
<dbReference type="SUPFAM" id="SSF56059">
    <property type="entry name" value="Glutathione synthetase ATP-binding domain-like"/>
    <property type="match status" value="1"/>
</dbReference>
<dbReference type="SUPFAM" id="SSF52440">
    <property type="entry name" value="PreATP-grasp domain"/>
    <property type="match status" value="1"/>
</dbReference>
<dbReference type="PROSITE" id="PS50975">
    <property type="entry name" value="ATP_GRASP"/>
    <property type="match status" value="1"/>
</dbReference>
<name>PURP_METJA</name>
<comment type="function">
    <text evidence="1 2">Catalyzes the ATP- and formate-dependent formylation of 5-aminoimidazole-4-carboxamide-1-beta-d-ribofuranosyl 5'-monophosphate (AICAR) to 5-formaminoimidazole-4-carboxamide-1-beta-d-ribofuranosyl 5'-monophosphate (FAICAR) in the absence of folates.</text>
</comment>
<comment type="catalytic activity">
    <reaction evidence="1">
        <text>5-amino-1-(5-phospho-beta-D-ribosyl)imidazole-4-carboxamide + formate + ATP = 5-formamido-1-(5-phospho-D-ribosyl)imidazole-4-carboxamide + ADP + phosphate</text>
        <dbReference type="Rhea" id="RHEA:24836"/>
        <dbReference type="ChEBI" id="CHEBI:15740"/>
        <dbReference type="ChEBI" id="CHEBI:30616"/>
        <dbReference type="ChEBI" id="CHEBI:43474"/>
        <dbReference type="ChEBI" id="CHEBI:58467"/>
        <dbReference type="ChEBI" id="CHEBI:58475"/>
        <dbReference type="ChEBI" id="CHEBI:456216"/>
        <dbReference type="EC" id="6.3.4.23"/>
    </reaction>
</comment>
<comment type="cofactor">
    <cofactor evidence="2">
        <name>Mg(2+)</name>
        <dbReference type="ChEBI" id="CHEBI:18420"/>
    </cofactor>
    <cofactor evidence="2">
        <name>Mn(2+)</name>
        <dbReference type="ChEBI" id="CHEBI:29035"/>
    </cofactor>
    <text evidence="2">Binds 1 Mg(2+) or Mn(2+) ion per subunit.</text>
</comment>
<comment type="activity regulation">
    <text evidence="2">Inhibited by ADP.</text>
</comment>
<comment type="biophysicochemical properties">
    <phDependence>
        <text evidence="2">Optimum pH is 6.25.</text>
    </phDependence>
</comment>
<comment type="pathway">
    <text evidence="1">Purine metabolism; IMP biosynthesis via de novo pathway; 5-formamido-1-(5-phospho-D-ribosyl)imidazole-4-carboxamide from 5-amino-1-(5-phospho-D-ribosyl)imidazole-4-carboxamide (formate route): step 1/1.</text>
</comment>
<comment type="subunit">
    <text evidence="3">Homohexamer. Dimer of trimers.</text>
</comment>
<comment type="similarity">
    <text evidence="1">Belongs to the phosphohexose mutase family.</text>
</comment>
<sequence>MISKDEILEIFDKYNKDEITIATLGSHTSLHILKGAKLEGFSTVCITMKGRDVPYKRFKVADKFIYVDNFSDIKNEEIQEKLRELNSIVVPHGSFIAYCGLDNVENSFLVPMFGNRRILRWESERSLEGKLLREAGLRVPKKYESPEDIDGTVIVKFPGARGGRGYFIASSTEEFYKKAEDLKKRGILTDEDIANAHIEEYVVGTNFCIHYFYSPLKDEVELLGMDKRYESNIDGLVRIPAKDQLEMNINPSYVITGNIPVVIRESLLPQVFEMGDKLVAKAKELVPPGMIGPFCLQSLCNENLELVVFEMSARVDGGTNSFMNGGPYSFLYNGEPLSMGQRIAREIKMALQLDMIDKIIS</sequence>
<protein>
    <recommendedName>
        <fullName evidence="1">5-formaminoimidazole-4-carboxamide-1-(beta)-D-ribofuranosyl 5'-monophosphate synthetase</fullName>
        <ecNumber evidence="1">6.3.4.23</ecNumber>
    </recommendedName>
    <alternativeName>
        <fullName evidence="1">5-aminoimidazole-4-carboxamide-1-beta-D-ribofuranosyl 5'-monophosphate--formate ligase</fullName>
    </alternativeName>
</protein>
<proteinExistence type="evidence at protein level"/>
<accession>Q57600</accession>